<gene>
    <name evidence="1" type="primary">panD</name>
    <name type="ordered locus">DSY0212</name>
</gene>
<accession>Q251P1</accession>
<sequence length="127" mass="14096">MFRTMMKSKIHRATVTEANLKYVGSITIDEELLEVADILPNEKVQVVNNNNGARLETYVIPGKRGERTVCLNGAAARLVQVGDEVIIIAYGIFTDEAARTYEPKVIFVDEGNNPVKIAHEEIHGQQS</sequence>
<evidence type="ECO:0000255" key="1">
    <source>
        <dbReference type="HAMAP-Rule" id="MF_00446"/>
    </source>
</evidence>
<dbReference type="EC" id="4.1.1.11" evidence="1"/>
<dbReference type="EMBL" id="AP008230">
    <property type="protein sequence ID" value="BAE82001.1"/>
    <property type="molecule type" value="Genomic_DNA"/>
</dbReference>
<dbReference type="RefSeq" id="WP_011458949.1">
    <property type="nucleotide sequence ID" value="NC_007907.1"/>
</dbReference>
<dbReference type="SMR" id="Q251P1"/>
<dbReference type="STRING" id="138119.DSY0212"/>
<dbReference type="KEGG" id="dsy:DSY0212"/>
<dbReference type="eggNOG" id="COG0853">
    <property type="taxonomic scope" value="Bacteria"/>
</dbReference>
<dbReference type="HOGENOM" id="CLU_115305_2_0_9"/>
<dbReference type="UniPathway" id="UPA00028">
    <property type="reaction ID" value="UER00002"/>
</dbReference>
<dbReference type="Proteomes" id="UP000001946">
    <property type="component" value="Chromosome"/>
</dbReference>
<dbReference type="GO" id="GO:0005829">
    <property type="term" value="C:cytosol"/>
    <property type="evidence" value="ECO:0007669"/>
    <property type="project" value="TreeGrafter"/>
</dbReference>
<dbReference type="GO" id="GO:0004068">
    <property type="term" value="F:aspartate 1-decarboxylase activity"/>
    <property type="evidence" value="ECO:0007669"/>
    <property type="project" value="UniProtKB-UniRule"/>
</dbReference>
<dbReference type="GO" id="GO:0006523">
    <property type="term" value="P:alanine biosynthetic process"/>
    <property type="evidence" value="ECO:0007669"/>
    <property type="project" value="InterPro"/>
</dbReference>
<dbReference type="GO" id="GO:0015940">
    <property type="term" value="P:pantothenate biosynthetic process"/>
    <property type="evidence" value="ECO:0007669"/>
    <property type="project" value="UniProtKB-UniRule"/>
</dbReference>
<dbReference type="CDD" id="cd06919">
    <property type="entry name" value="Asp_decarbox"/>
    <property type="match status" value="1"/>
</dbReference>
<dbReference type="Gene3D" id="2.40.40.20">
    <property type="match status" value="1"/>
</dbReference>
<dbReference type="HAMAP" id="MF_00446">
    <property type="entry name" value="PanD"/>
    <property type="match status" value="1"/>
</dbReference>
<dbReference type="InterPro" id="IPR009010">
    <property type="entry name" value="Asp_de-COase-like_dom_sf"/>
</dbReference>
<dbReference type="InterPro" id="IPR003190">
    <property type="entry name" value="Asp_decarbox"/>
</dbReference>
<dbReference type="NCBIfam" id="TIGR00223">
    <property type="entry name" value="panD"/>
    <property type="match status" value="1"/>
</dbReference>
<dbReference type="PANTHER" id="PTHR21012">
    <property type="entry name" value="ASPARTATE 1-DECARBOXYLASE"/>
    <property type="match status" value="1"/>
</dbReference>
<dbReference type="PANTHER" id="PTHR21012:SF0">
    <property type="entry name" value="ASPARTATE 1-DECARBOXYLASE"/>
    <property type="match status" value="1"/>
</dbReference>
<dbReference type="Pfam" id="PF02261">
    <property type="entry name" value="Asp_decarbox"/>
    <property type="match status" value="1"/>
</dbReference>
<dbReference type="PIRSF" id="PIRSF006246">
    <property type="entry name" value="Asp_decarbox"/>
    <property type="match status" value="1"/>
</dbReference>
<dbReference type="SUPFAM" id="SSF50692">
    <property type="entry name" value="ADC-like"/>
    <property type="match status" value="1"/>
</dbReference>
<keyword id="KW-0068">Autocatalytic cleavage</keyword>
<keyword id="KW-0963">Cytoplasm</keyword>
<keyword id="KW-0210">Decarboxylase</keyword>
<keyword id="KW-0456">Lyase</keyword>
<keyword id="KW-0566">Pantothenate biosynthesis</keyword>
<keyword id="KW-0670">Pyruvate</keyword>
<keyword id="KW-1185">Reference proteome</keyword>
<keyword id="KW-0704">Schiff base</keyword>
<keyword id="KW-0865">Zymogen</keyword>
<proteinExistence type="inferred from homology"/>
<organism>
    <name type="scientific">Desulfitobacterium hafniense (strain Y51)</name>
    <dbReference type="NCBI Taxonomy" id="138119"/>
    <lineage>
        <taxon>Bacteria</taxon>
        <taxon>Bacillati</taxon>
        <taxon>Bacillota</taxon>
        <taxon>Clostridia</taxon>
        <taxon>Eubacteriales</taxon>
        <taxon>Desulfitobacteriaceae</taxon>
        <taxon>Desulfitobacterium</taxon>
    </lineage>
</organism>
<feature type="chain" id="PRO_0000306965" description="Aspartate 1-decarboxylase beta chain" evidence="1">
    <location>
        <begin position="1"/>
        <end position="24"/>
    </location>
</feature>
<feature type="chain" id="PRO_0000306966" description="Aspartate 1-decarboxylase alpha chain" evidence="1">
    <location>
        <begin position="25"/>
        <end position="127"/>
    </location>
</feature>
<feature type="active site" description="Schiff-base intermediate with substrate; via pyruvic acid" evidence="1">
    <location>
        <position position="25"/>
    </location>
</feature>
<feature type="active site" description="Proton donor" evidence="1">
    <location>
        <position position="58"/>
    </location>
</feature>
<feature type="binding site" evidence="1">
    <location>
        <position position="57"/>
    </location>
    <ligand>
        <name>substrate</name>
    </ligand>
</feature>
<feature type="binding site" evidence="1">
    <location>
        <begin position="73"/>
        <end position="75"/>
    </location>
    <ligand>
        <name>substrate</name>
    </ligand>
</feature>
<feature type="modified residue" description="Pyruvic acid (Ser)" evidence="1">
    <location>
        <position position="25"/>
    </location>
</feature>
<reference key="1">
    <citation type="journal article" date="2006" name="J. Bacteriol.">
        <title>Complete genome sequence of the dehalorespiring bacterium Desulfitobacterium hafniense Y51 and comparison with Dehalococcoides ethenogenes 195.</title>
        <authorList>
            <person name="Nonaka H."/>
            <person name="Keresztes G."/>
            <person name="Shinoda Y."/>
            <person name="Ikenaga Y."/>
            <person name="Abe M."/>
            <person name="Naito K."/>
            <person name="Inatomi K."/>
            <person name="Furukawa K."/>
            <person name="Inui M."/>
            <person name="Yukawa H."/>
        </authorList>
    </citation>
    <scope>NUCLEOTIDE SEQUENCE [LARGE SCALE GENOMIC DNA]</scope>
    <source>
        <strain>Y51</strain>
    </source>
</reference>
<protein>
    <recommendedName>
        <fullName evidence="1">Aspartate 1-decarboxylase</fullName>
        <ecNumber evidence="1">4.1.1.11</ecNumber>
    </recommendedName>
    <alternativeName>
        <fullName evidence="1">Aspartate alpha-decarboxylase</fullName>
    </alternativeName>
    <component>
        <recommendedName>
            <fullName evidence="1">Aspartate 1-decarboxylase beta chain</fullName>
        </recommendedName>
    </component>
    <component>
        <recommendedName>
            <fullName evidence="1">Aspartate 1-decarboxylase alpha chain</fullName>
        </recommendedName>
    </component>
</protein>
<name>PAND_DESHY</name>
<comment type="function">
    <text evidence="1">Catalyzes the pyruvoyl-dependent decarboxylation of aspartate to produce beta-alanine.</text>
</comment>
<comment type="catalytic activity">
    <reaction evidence="1">
        <text>L-aspartate + H(+) = beta-alanine + CO2</text>
        <dbReference type="Rhea" id="RHEA:19497"/>
        <dbReference type="ChEBI" id="CHEBI:15378"/>
        <dbReference type="ChEBI" id="CHEBI:16526"/>
        <dbReference type="ChEBI" id="CHEBI:29991"/>
        <dbReference type="ChEBI" id="CHEBI:57966"/>
        <dbReference type="EC" id="4.1.1.11"/>
    </reaction>
</comment>
<comment type="cofactor">
    <cofactor evidence="1">
        <name>pyruvate</name>
        <dbReference type="ChEBI" id="CHEBI:15361"/>
    </cofactor>
    <text evidence="1">Binds 1 pyruvoyl group covalently per subunit.</text>
</comment>
<comment type="pathway">
    <text evidence="1">Cofactor biosynthesis; (R)-pantothenate biosynthesis; beta-alanine from L-aspartate: step 1/1.</text>
</comment>
<comment type="subunit">
    <text evidence="1">Heterooctamer of four alpha and four beta subunits.</text>
</comment>
<comment type="subcellular location">
    <subcellularLocation>
        <location evidence="1">Cytoplasm</location>
    </subcellularLocation>
</comment>
<comment type="PTM">
    <text evidence="1">Is synthesized initially as an inactive proenzyme, which is activated by self-cleavage at a specific serine bond to produce a beta-subunit with a hydroxyl group at its C-terminus and an alpha-subunit with a pyruvoyl group at its N-terminus.</text>
</comment>
<comment type="similarity">
    <text evidence="1">Belongs to the PanD family.</text>
</comment>